<name>RS12_PYRIL</name>
<gene>
    <name evidence="1" type="primary">rps12</name>
    <name type="ordered locus">Pisl_0698</name>
</gene>
<proteinExistence type="inferred from homology"/>
<organism>
    <name type="scientific">Pyrobaculum islandicum (strain DSM 4184 / JCM 9189 / GEO3)</name>
    <dbReference type="NCBI Taxonomy" id="384616"/>
    <lineage>
        <taxon>Archaea</taxon>
        <taxon>Thermoproteota</taxon>
        <taxon>Thermoprotei</taxon>
        <taxon>Thermoproteales</taxon>
        <taxon>Thermoproteaceae</taxon>
        <taxon>Pyrobaculum</taxon>
    </lineage>
</organism>
<protein>
    <recommendedName>
        <fullName evidence="1">Small ribosomal subunit protein uS12</fullName>
    </recommendedName>
    <alternativeName>
        <fullName evidence="2">30S ribosomal protein S12</fullName>
    </alternativeName>
</protein>
<accession>A1RSE4</accession>
<dbReference type="EMBL" id="CP000504">
    <property type="protein sequence ID" value="ABL87876.1"/>
    <property type="molecule type" value="Genomic_DNA"/>
</dbReference>
<dbReference type="RefSeq" id="WP_011762452.1">
    <property type="nucleotide sequence ID" value="NC_008701.1"/>
</dbReference>
<dbReference type="SMR" id="A1RSE4"/>
<dbReference type="STRING" id="384616.Pisl_0698"/>
<dbReference type="GeneID" id="4617172"/>
<dbReference type="KEGG" id="pis:Pisl_0698"/>
<dbReference type="eggNOG" id="arCOG04255">
    <property type="taxonomic scope" value="Archaea"/>
</dbReference>
<dbReference type="HOGENOM" id="CLU_115574_0_1_2"/>
<dbReference type="OrthoDB" id="45154at2157"/>
<dbReference type="Proteomes" id="UP000002595">
    <property type="component" value="Chromosome"/>
</dbReference>
<dbReference type="GO" id="GO:0015935">
    <property type="term" value="C:small ribosomal subunit"/>
    <property type="evidence" value="ECO:0007669"/>
    <property type="project" value="InterPro"/>
</dbReference>
<dbReference type="GO" id="GO:0019843">
    <property type="term" value="F:rRNA binding"/>
    <property type="evidence" value="ECO:0007669"/>
    <property type="project" value="UniProtKB-UniRule"/>
</dbReference>
<dbReference type="GO" id="GO:0003735">
    <property type="term" value="F:structural constituent of ribosome"/>
    <property type="evidence" value="ECO:0007669"/>
    <property type="project" value="InterPro"/>
</dbReference>
<dbReference type="GO" id="GO:0006412">
    <property type="term" value="P:translation"/>
    <property type="evidence" value="ECO:0007669"/>
    <property type="project" value="UniProtKB-UniRule"/>
</dbReference>
<dbReference type="CDD" id="cd03367">
    <property type="entry name" value="Ribosomal_S23"/>
    <property type="match status" value="1"/>
</dbReference>
<dbReference type="FunFam" id="2.40.50.140:FF:000007">
    <property type="entry name" value="40S ribosomal protein S23"/>
    <property type="match status" value="1"/>
</dbReference>
<dbReference type="Gene3D" id="2.40.50.140">
    <property type="entry name" value="Nucleic acid-binding proteins"/>
    <property type="match status" value="1"/>
</dbReference>
<dbReference type="HAMAP" id="MF_00403_A">
    <property type="entry name" value="Ribosomal_uS12_A"/>
    <property type="match status" value="1"/>
</dbReference>
<dbReference type="InterPro" id="IPR012340">
    <property type="entry name" value="NA-bd_OB-fold"/>
</dbReference>
<dbReference type="InterPro" id="IPR006032">
    <property type="entry name" value="Ribosomal_uS12"/>
</dbReference>
<dbReference type="InterPro" id="IPR022863">
    <property type="entry name" value="Ribosomal_uS12_arc"/>
</dbReference>
<dbReference type="InterPro" id="IPR005680">
    <property type="entry name" value="Ribosomal_uS12_euk/arc"/>
</dbReference>
<dbReference type="NCBIfam" id="NF003254">
    <property type="entry name" value="PRK04211.1"/>
    <property type="match status" value="1"/>
</dbReference>
<dbReference type="NCBIfam" id="TIGR00982">
    <property type="entry name" value="uS12_E_A"/>
    <property type="match status" value="1"/>
</dbReference>
<dbReference type="PANTHER" id="PTHR11652">
    <property type="entry name" value="30S RIBOSOMAL PROTEIN S12 FAMILY MEMBER"/>
    <property type="match status" value="1"/>
</dbReference>
<dbReference type="Pfam" id="PF00164">
    <property type="entry name" value="Ribosom_S12_S23"/>
    <property type="match status" value="1"/>
</dbReference>
<dbReference type="PIRSF" id="PIRSF002133">
    <property type="entry name" value="Ribosomal_S12/S23"/>
    <property type="match status" value="1"/>
</dbReference>
<dbReference type="SUPFAM" id="SSF50249">
    <property type="entry name" value="Nucleic acid-binding proteins"/>
    <property type="match status" value="1"/>
</dbReference>
<evidence type="ECO:0000255" key="1">
    <source>
        <dbReference type="HAMAP-Rule" id="MF_00403"/>
    </source>
</evidence>
<evidence type="ECO:0000305" key="2"/>
<keyword id="KW-0687">Ribonucleoprotein</keyword>
<keyword id="KW-0689">Ribosomal protein</keyword>
<keyword id="KW-0694">RNA-binding</keyword>
<keyword id="KW-0699">rRNA-binding</keyword>
<reference key="1">
    <citation type="submission" date="2006-12" db="EMBL/GenBank/DDBJ databases">
        <title>Complete sequence of Pyrobaculum islandicum DSM 4184.</title>
        <authorList>
            <person name="Copeland A."/>
            <person name="Lucas S."/>
            <person name="Lapidus A."/>
            <person name="Barry K."/>
            <person name="Detter J.C."/>
            <person name="Glavina del Rio T."/>
            <person name="Dalin E."/>
            <person name="Tice H."/>
            <person name="Pitluck S."/>
            <person name="Meincke L."/>
            <person name="Brettin T."/>
            <person name="Bruce D."/>
            <person name="Han C."/>
            <person name="Tapia R."/>
            <person name="Gilna P."/>
            <person name="Schmutz J."/>
            <person name="Larimer F."/>
            <person name="Land M."/>
            <person name="Hauser L."/>
            <person name="Kyrpides N."/>
            <person name="Mikhailova N."/>
            <person name="Cozen A.E."/>
            <person name="Fitz-Gibbon S.T."/>
            <person name="House C.H."/>
            <person name="Saltikov C."/>
            <person name="Lowe T."/>
            <person name="Richardson P."/>
        </authorList>
    </citation>
    <scope>NUCLEOTIDE SEQUENCE [LARGE SCALE GENOMIC DNA]</scope>
    <source>
        <strain>DSM 4184 / JCM 9189 / GEO3</strain>
    </source>
</reference>
<sequence>MPGKKSPYGLFAGGKLKRKRKRFKWNDITYKRKMLGLVEKYDPLEGAPMARGIVLEKVGVEARKPNAAVRKCVRVQLVKNGKVVTAFVPLDGSLNYINEHDEVIIERIGGPEGRSLGDIPGVRFKVIKVNGVSLWAIWRGKKQKPTR</sequence>
<feature type="chain" id="PRO_0000296054" description="Small ribosomal subunit protein uS12">
    <location>
        <begin position="1"/>
        <end position="147"/>
    </location>
</feature>
<comment type="function">
    <text evidence="1">With S4 and S5 plays an important role in translational accuracy. Located at the interface of the 30S and 50S subunits.</text>
</comment>
<comment type="subunit">
    <text evidence="1">Part of the 30S ribosomal subunit.</text>
</comment>
<comment type="similarity">
    <text evidence="1">Belongs to the universal ribosomal protein uS12 family.</text>
</comment>